<organism>
    <name type="scientific">Methanococcus maripaludis (strain C5 / ATCC BAA-1333)</name>
    <dbReference type="NCBI Taxonomy" id="402880"/>
    <lineage>
        <taxon>Archaea</taxon>
        <taxon>Methanobacteriati</taxon>
        <taxon>Methanobacteriota</taxon>
        <taxon>Methanomada group</taxon>
        <taxon>Methanococci</taxon>
        <taxon>Methanococcales</taxon>
        <taxon>Methanococcaceae</taxon>
        <taxon>Methanococcus</taxon>
    </lineage>
</organism>
<keyword id="KW-0963">Cytoplasm</keyword>
<keyword id="KW-0324">Glycolysis</keyword>
<keyword id="KW-0456">Lyase</keyword>
<keyword id="KW-0460">Magnesium</keyword>
<keyword id="KW-0479">Metal-binding</keyword>
<keyword id="KW-0964">Secreted</keyword>
<gene>
    <name evidence="1" type="primary">eno</name>
    <name type="ordered locus">MmarC5_1242</name>
</gene>
<evidence type="ECO:0000255" key="1">
    <source>
        <dbReference type="HAMAP-Rule" id="MF_00318"/>
    </source>
</evidence>
<evidence type="ECO:0000305" key="2"/>
<feature type="chain" id="PRO_0000337623" description="Enolase">
    <location>
        <begin position="1"/>
        <end position="426"/>
    </location>
</feature>
<feature type="active site" description="Proton donor" evidence="1">
    <location>
        <position position="209"/>
    </location>
</feature>
<feature type="active site" description="Proton acceptor" evidence="1">
    <location>
        <position position="338"/>
    </location>
</feature>
<feature type="binding site" evidence="1">
    <location>
        <position position="165"/>
    </location>
    <ligand>
        <name>(2R)-2-phosphoglycerate</name>
        <dbReference type="ChEBI" id="CHEBI:58289"/>
    </ligand>
</feature>
<feature type="binding site" evidence="1">
    <location>
        <position position="244"/>
    </location>
    <ligand>
        <name>Mg(2+)</name>
        <dbReference type="ChEBI" id="CHEBI:18420"/>
    </ligand>
</feature>
<feature type="binding site" evidence="1">
    <location>
        <position position="287"/>
    </location>
    <ligand>
        <name>Mg(2+)</name>
        <dbReference type="ChEBI" id="CHEBI:18420"/>
    </ligand>
</feature>
<feature type="binding site" evidence="1">
    <location>
        <position position="313"/>
    </location>
    <ligand>
        <name>Mg(2+)</name>
        <dbReference type="ChEBI" id="CHEBI:18420"/>
    </ligand>
</feature>
<feature type="binding site" evidence="1">
    <location>
        <position position="338"/>
    </location>
    <ligand>
        <name>(2R)-2-phosphoglycerate</name>
        <dbReference type="ChEBI" id="CHEBI:58289"/>
    </ligand>
</feature>
<feature type="binding site" evidence="1">
    <location>
        <position position="367"/>
    </location>
    <ligand>
        <name>(2R)-2-phosphoglycerate</name>
        <dbReference type="ChEBI" id="CHEBI:58289"/>
    </ligand>
</feature>
<feature type="binding site" evidence="1">
    <location>
        <position position="368"/>
    </location>
    <ligand>
        <name>(2R)-2-phosphoglycerate</name>
        <dbReference type="ChEBI" id="CHEBI:58289"/>
    </ligand>
</feature>
<feature type="binding site" evidence="1">
    <location>
        <position position="389"/>
    </location>
    <ligand>
        <name>(2R)-2-phosphoglycerate</name>
        <dbReference type="ChEBI" id="CHEBI:58289"/>
    </ligand>
</feature>
<sequence>MDDSFDIYEIKARQVLDSRGNPTVEAEVLTAGGGYGHTIVPSGASTGTFEAVELRDATEKYGGKSVLNAVSNVNDIIAQELIGEDARNQRLIDQIMINLDGTENKGNLGANAILAVSLAVAKAAADTASLPLYKYIGGCNAYVMPAPMMNVLNGGQHAGNALDFQEFMIMPVGADSFAEAVRMCAETYQSLKKVVAEKYGKDAVNIGDEGGFAPPVKTIDEALALLLEGVKRAGYEDEIVFTLDSAASEFYDEKSGSYIVAGEKVSTDKLIDIYKEMVAQYPIVSIEDPLFEEDFEGFTKATKELKGIQIVGDDLFVTNTKRLKKGIEMGASNSLLLKVNQIGTLSESIDAANMAFRNGYSLVVSHRSGESEDSTIADLAVALNSGQIKTGAPARGERTAKYNQLIRIEEELQISKYAGKDFKVPF</sequence>
<name>ENO_METM5</name>
<proteinExistence type="inferred from homology"/>
<accession>A4FZA6</accession>
<dbReference type="EC" id="4.2.1.11" evidence="1"/>
<dbReference type="EMBL" id="CP000609">
    <property type="protein sequence ID" value="ABO35540.1"/>
    <property type="status" value="ALT_INIT"/>
    <property type="molecule type" value="Genomic_DNA"/>
</dbReference>
<dbReference type="RefSeq" id="WP_011868993.1">
    <property type="nucleotide sequence ID" value="NC_009135.1"/>
</dbReference>
<dbReference type="SMR" id="A4FZA6"/>
<dbReference type="STRING" id="402880.MmarC5_1242"/>
<dbReference type="GeneID" id="4929067"/>
<dbReference type="KEGG" id="mmq:MmarC5_1242"/>
<dbReference type="eggNOG" id="arCOG01169">
    <property type="taxonomic scope" value="Archaea"/>
</dbReference>
<dbReference type="HOGENOM" id="CLU_031223_2_1_2"/>
<dbReference type="OrthoDB" id="8680at2157"/>
<dbReference type="UniPathway" id="UPA00109">
    <property type="reaction ID" value="UER00187"/>
</dbReference>
<dbReference type="Proteomes" id="UP000000253">
    <property type="component" value="Chromosome"/>
</dbReference>
<dbReference type="GO" id="GO:0009986">
    <property type="term" value="C:cell surface"/>
    <property type="evidence" value="ECO:0007669"/>
    <property type="project" value="UniProtKB-SubCell"/>
</dbReference>
<dbReference type="GO" id="GO:0005576">
    <property type="term" value="C:extracellular region"/>
    <property type="evidence" value="ECO:0007669"/>
    <property type="project" value="UniProtKB-SubCell"/>
</dbReference>
<dbReference type="GO" id="GO:0000015">
    <property type="term" value="C:phosphopyruvate hydratase complex"/>
    <property type="evidence" value="ECO:0007669"/>
    <property type="project" value="InterPro"/>
</dbReference>
<dbReference type="GO" id="GO:0000287">
    <property type="term" value="F:magnesium ion binding"/>
    <property type="evidence" value="ECO:0007669"/>
    <property type="project" value="UniProtKB-UniRule"/>
</dbReference>
<dbReference type="GO" id="GO:0004634">
    <property type="term" value="F:phosphopyruvate hydratase activity"/>
    <property type="evidence" value="ECO:0007669"/>
    <property type="project" value="UniProtKB-UniRule"/>
</dbReference>
<dbReference type="GO" id="GO:0006096">
    <property type="term" value="P:glycolytic process"/>
    <property type="evidence" value="ECO:0007669"/>
    <property type="project" value="UniProtKB-UniRule"/>
</dbReference>
<dbReference type="CDD" id="cd03313">
    <property type="entry name" value="enolase"/>
    <property type="match status" value="1"/>
</dbReference>
<dbReference type="FunFam" id="3.30.390.10:FF:000001">
    <property type="entry name" value="Enolase"/>
    <property type="match status" value="1"/>
</dbReference>
<dbReference type="Gene3D" id="3.20.20.120">
    <property type="entry name" value="Enolase-like C-terminal domain"/>
    <property type="match status" value="1"/>
</dbReference>
<dbReference type="Gene3D" id="3.30.390.10">
    <property type="entry name" value="Enolase-like, N-terminal domain"/>
    <property type="match status" value="1"/>
</dbReference>
<dbReference type="HAMAP" id="MF_00318">
    <property type="entry name" value="Enolase"/>
    <property type="match status" value="1"/>
</dbReference>
<dbReference type="InterPro" id="IPR000941">
    <property type="entry name" value="Enolase"/>
</dbReference>
<dbReference type="InterPro" id="IPR036849">
    <property type="entry name" value="Enolase-like_C_sf"/>
</dbReference>
<dbReference type="InterPro" id="IPR029017">
    <property type="entry name" value="Enolase-like_N"/>
</dbReference>
<dbReference type="InterPro" id="IPR020810">
    <property type="entry name" value="Enolase_C"/>
</dbReference>
<dbReference type="InterPro" id="IPR020809">
    <property type="entry name" value="Enolase_CS"/>
</dbReference>
<dbReference type="InterPro" id="IPR020811">
    <property type="entry name" value="Enolase_N"/>
</dbReference>
<dbReference type="NCBIfam" id="TIGR01060">
    <property type="entry name" value="eno"/>
    <property type="match status" value="1"/>
</dbReference>
<dbReference type="PANTHER" id="PTHR11902">
    <property type="entry name" value="ENOLASE"/>
    <property type="match status" value="1"/>
</dbReference>
<dbReference type="PANTHER" id="PTHR11902:SF1">
    <property type="entry name" value="ENOLASE"/>
    <property type="match status" value="1"/>
</dbReference>
<dbReference type="Pfam" id="PF00113">
    <property type="entry name" value="Enolase_C"/>
    <property type="match status" value="1"/>
</dbReference>
<dbReference type="Pfam" id="PF03952">
    <property type="entry name" value="Enolase_N"/>
    <property type="match status" value="1"/>
</dbReference>
<dbReference type="PIRSF" id="PIRSF001400">
    <property type="entry name" value="Enolase"/>
    <property type="match status" value="1"/>
</dbReference>
<dbReference type="PRINTS" id="PR00148">
    <property type="entry name" value="ENOLASE"/>
</dbReference>
<dbReference type="SFLD" id="SFLDS00001">
    <property type="entry name" value="Enolase"/>
    <property type="match status" value="1"/>
</dbReference>
<dbReference type="SFLD" id="SFLDF00002">
    <property type="entry name" value="enolase"/>
    <property type="match status" value="1"/>
</dbReference>
<dbReference type="SMART" id="SM01192">
    <property type="entry name" value="Enolase_C"/>
    <property type="match status" value="1"/>
</dbReference>
<dbReference type="SMART" id="SM01193">
    <property type="entry name" value="Enolase_N"/>
    <property type="match status" value="1"/>
</dbReference>
<dbReference type="SUPFAM" id="SSF51604">
    <property type="entry name" value="Enolase C-terminal domain-like"/>
    <property type="match status" value="1"/>
</dbReference>
<dbReference type="SUPFAM" id="SSF54826">
    <property type="entry name" value="Enolase N-terminal domain-like"/>
    <property type="match status" value="1"/>
</dbReference>
<dbReference type="PROSITE" id="PS00164">
    <property type="entry name" value="ENOLASE"/>
    <property type="match status" value="1"/>
</dbReference>
<comment type="function">
    <text evidence="1">Catalyzes the reversible conversion of 2-phosphoglycerate (2-PG) into phosphoenolpyruvate (PEP). It is essential for the degradation of carbohydrates via glycolysis.</text>
</comment>
<comment type="catalytic activity">
    <reaction evidence="1">
        <text>(2R)-2-phosphoglycerate = phosphoenolpyruvate + H2O</text>
        <dbReference type="Rhea" id="RHEA:10164"/>
        <dbReference type="ChEBI" id="CHEBI:15377"/>
        <dbReference type="ChEBI" id="CHEBI:58289"/>
        <dbReference type="ChEBI" id="CHEBI:58702"/>
        <dbReference type="EC" id="4.2.1.11"/>
    </reaction>
</comment>
<comment type="cofactor">
    <cofactor evidence="1">
        <name>Mg(2+)</name>
        <dbReference type="ChEBI" id="CHEBI:18420"/>
    </cofactor>
    <text evidence="1">Binds a second Mg(2+) ion via substrate during catalysis.</text>
</comment>
<comment type="pathway">
    <text evidence="1">Carbohydrate degradation; glycolysis; pyruvate from D-glyceraldehyde 3-phosphate: step 4/5.</text>
</comment>
<comment type="subcellular location">
    <subcellularLocation>
        <location evidence="1">Cytoplasm</location>
    </subcellularLocation>
    <subcellularLocation>
        <location evidence="1">Secreted</location>
    </subcellularLocation>
    <subcellularLocation>
        <location evidence="1">Cell surface</location>
    </subcellularLocation>
    <text evidence="1">Fractions of enolase are present in both the cytoplasm and on the cell surface.</text>
</comment>
<comment type="similarity">
    <text evidence="1">Belongs to the enolase family.</text>
</comment>
<comment type="sequence caution" evidence="2">
    <conflict type="erroneous initiation">
        <sequence resource="EMBL-CDS" id="ABO35540"/>
    </conflict>
    <text>Extended N-terminus.</text>
</comment>
<protein>
    <recommendedName>
        <fullName evidence="1">Enolase</fullName>
        <ecNumber evidence="1">4.2.1.11</ecNumber>
    </recommendedName>
    <alternativeName>
        <fullName evidence="1">2-phospho-D-glycerate hydro-lyase</fullName>
    </alternativeName>
    <alternativeName>
        <fullName evidence="1">2-phosphoglycerate dehydratase</fullName>
    </alternativeName>
</protein>
<reference key="1">
    <citation type="submission" date="2007-03" db="EMBL/GenBank/DDBJ databases">
        <title>Complete sequence of chromosome of Methanococcus maripaludis C5.</title>
        <authorList>
            <consortium name="US DOE Joint Genome Institute"/>
            <person name="Copeland A."/>
            <person name="Lucas S."/>
            <person name="Lapidus A."/>
            <person name="Barry K."/>
            <person name="Glavina del Rio T."/>
            <person name="Dalin E."/>
            <person name="Tice H."/>
            <person name="Pitluck S."/>
            <person name="Chertkov O."/>
            <person name="Brettin T."/>
            <person name="Bruce D."/>
            <person name="Han C."/>
            <person name="Detter J.C."/>
            <person name="Schmutz J."/>
            <person name="Larimer F."/>
            <person name="Land M."/>
            <person name="Hauser L."/>
            <person name="Kyrpides N."/>
            <person name="Mikhailova N."/>
            <person name="Sieprawska-Lupa M."/>
            <person name="Whitman W.B."/>
            <person name="Richardson P."/>
        </authorList>
    </citation>
    <scope>NUCLEOTIDE SEQUENCE [LARGE SCALE GENOMIC DNA]</scope>
    <source>
        <strain>C5 / ATCC BAA-1333</strain>
    </source>
</reference>